<accession>Q9MAU3</accession>
<accession>B9DGR1</accession>
<accession>B9DH88</accession>
<dbReference type="EMBL" id="AY463621">
    <property type="protein sequence ID" value="AAR28023.1"/>
    <property type="molecule type" value="mRNA"/>
</dbReference>
<dbReference type="EMBL" id="AC004809">
    <property type="protein sequence ID" value="AAF40443.1"/>
    <property type="molecule type" value="Genomic_DNA"/>
</dbReference>
<dbReference type="EMBL" id="CP002684">
    <property type="protein sequence ID" value="AEE27766.1"/>
    <property type="molecule type" value="Genomic_DNA"/>
</dbReference>
<dbReference type="EMBL" id="CP002684">
    <property type="protein sequence ID" value="AEE27767.1"/>
    <property type="molecule type" value="Genomic_DNA"/>
</dbReference>
<dbReference type="EMBL" id="CP002684">
    <property type="protein sequence ID" value="AEE27768.1"/>
    <property type="molecule type" value="Genomic_DNA"/>
</dbReference>
<dbReference type="EMBL" id="AY050962">
    <property type="protein sequence ID" value="AAK93639.1"/>
    <property type="molecule type" value="mRNA"/>
</dbReference>
<dbReference type="EMBL" id="AY091292">
    <property type="protein sequence ID" value="AAM14231.1"/>
    <property type="molecule type" value="mRNA"/>
</dbReference>
<dbReference type="EMBL" id="AK317247">
    <property type="protein sequence ID" value="BAH19928.1"/>
    <property type="molecule type" value="mRNA"/>
</dbReference>
<dbReference type="EMBL" id="AK317438">
    <property type="protein sequence ID" value="BAH20105.1"/>
    <property type="molecule type" value="mRNA"/>
</dbReference>
<dbReference type="PIR" id="A86183">
    <property type="entry name" value="A86183"/>
</dbReference>
<dbReference type="RefSeq" id="NP_001030969.1">
    <property type="nucleotide sequence ID" value="NM_001035892.3"/>
</dbReference>
<dbReference type="RefSeq" id="NP_171987.1">
    <property type="nucleotide sequence ID" value="NM_100373.4"/>
</dbReference>
<dbReference type="RefSeq" id="NP_849592.1">
    <property type="nucleotide sequence ID" value="NM_179261.4"/>
</dbReference>
<dbReference type="SMR" id="Q9MAU3"/>
<dbReference type="BioGRID" id="24605">
    <property type="interactions" value="38"/>
</dbReference>
<dbReference type="FunCoup" id="Q9MAU3">
    <property type="interactions" value="4178"/>
</dbReference>
<dbReference type="IntAct" id="Q9MAU3">
    <property type="interactions" value="2"/>
</dbReference>
<dbReference type="STRING" id="3702.Q9MAU3"/>
<dbReference type="iPTMnet" id="Q9MAU3"/>
<dbReference type="PaxDb" id="3702-AT1G04950.3"/>
<dbReference type="ProteomicsDB" id="234123"/>
<dbReference type="EnsemblPlants" id="AT1G04950.1">
    <property type="protein sequence ID" value="AT1G04950.1"/>
    <property type="gene ID" value="AT1G04950"/>
</dbReference>
<dbReference type="EnsemblPlants" id="AT1G04950.2">
    <property type="protein sequence ID" value="AT1G04950.2"/>
    <property type="gene ID" value="AT1G04950"/>
</dbReference>
<dbReference type="EnsemblPlants" id="AT1G04950.3">
    <property type="protein sequence ID" value="AT1G04950.3"/>
    <property type="gene ID" value="AT1G04950"/>
</dbReference>
<dbReference type="GeneID" id="839370"/>
<dbReference type="Gramene" id="AT1G04950.1">
    <property type="protein sequence ID" value="AT1G04950.1"/>
    <property type="gene ID" value="AT1G04950"/>
</dbReference>
<dbReference type="Gramene" id="AT1G04950.2">
    <property type="protein sequence ID" value="AT1G04950.2"/>
    <property type="gene ID" value="AT1G04950"/>
</dbReference>
<dbReference type="Gramene" id="AT1G04950.3">
    <property type="protein sequence ID" value="AT1G04950.3"/>
    <property type="gene ID" value="AT1G04950"/>
</dbReference>
<dbReference type="KEGG" id="ath:AT1G04950"/>
<dbReference type="Araport" id="AT1G04950"/>
<dbReference type="TAIR" id="AT1G04950">
    <property type="gene designation" value="TAFII59"/>
</dbReference>
<dbReference type="eggNOG" id="KOG2549">
    <property type="taxonomic scope" value="Eukaryota"/>
</dbReference>
<dbReference type="HOGENOM" id="CLU_021711_1_0_1"/>
<dbReference type="InParanoid" id="Q9MAU3"/>
<dbReference type="OMA" id="DTSIVCH"/>
<dbReference type="PhylomeDB" id="Q9MAU3"/>
<dbReference type="PRO" id="PR:Q9MAU3"/>
<dbReference type="Proteomes" id="UP000006548">
    <property type="component" value="Chromosome 1"/>
</dbReference>
<dbReference type="ExpressionAtlas" id="Q9MAU3">
    <property type="expression patterns" value="baseline and differential"/>
</dbReference>
<dbReference type="GO" id="GO:0000124">
    <property type="term" value="C:SAGA complex"/>
    <property type="evidence" value="ECO:0007669"/>
    <property type="project" value="InterPro"/>
</dbReference>
<dbReference type="GO" id="GO:0046695">
    <property type="term" value="C:SLIK (SAGA-like) complex"/>
    <property type="evidence" value="ECO:0007669"/>
    <property type="project" value="InterPro"/>
</dbReference>
<dbReference type="GO" id="GO:0005669">
    <property type="term" value="C:transcription factor TFIID complex"/>
    <property type="evidence" value="ECO:0007669"/>
    <property type="project" value="InterPro"/>
</dbReference>
<dbReference type="GO" id="GO:0046982">
    <property type="term" value="F:protein heterodimerization activity"/>
    <property type="evidence" value="ECO:0007669"/>
    <property type="project" value="InterPro"/>
</dbReference>
<dbReference type="GO" id="GO:0016251">
    <property type="term" value="F:RNA polymerase II general transcription initiation factor activity"/>
    <property type="evidence" value="ECO:0007669"/>
    <property type="project" value="InterPro"/>
</dbReference>
<dbReference type="GO" id="GO:0009860">
    <property type="term" value="P:pollen tube growth"/>
    <property type="evidence" value="ECO:0000315"/>
    <property type="project" value="TAIR"/>
</dbReference>
<dbReference type="GO" id="GO:0006367">
    <property type="term" value="P:transcription initiation at RNA polymerase II promoter"/>
    <property type="evidence" value="ECO:0007669"/>
    <property type="project" value="InterPro"/>
</dbReference>
<dbReference type="CDD" id="cd22931">
    <property type="entry name" value="HFD_TAF6"/>
    <property type="match status" value="1"/>
</dbReference>
<dbReference type="CDD" id="cd08050">
    <property type="entry name" value="TAF6C"/>
    <property type="match status" value="1"/>
</dbReference>
<dbReference type="FunFam" id="1.10.20.10:FF:000046">
    <property type="entry name" value="transcription initiation factor TFIID subunit 6"/>
    <property type="match status" value="1"/>
</dbReference>
<dbReference type="FunFam" id="1.25.40.770:FF:000004">
    <property type="entry name" value="transcription initiation factor TFIID subunit 6"/>
    <property type="match status" value="1"/>
</dbReference>
<dbReference type="Gene3D" id="1.10.20.10">
    <property type="entry name" value="Histone, subunit A"/>
    <property type="match status" value="1"/>
</dbReference>
<dbReference type="Gene3D" id="1.25.40.770">
    <property type="entry name" value="TAF6, C-terminal HEAT repeat domain"/>
    <property type="match status" value="1"/>
</dbReference>
<dbReference type="InterPro" id="IPR016024">
    <property type="entry name" value="ARM-type_fold"/>
</dbReference>
<dbReference type="InterPro" id="IPR009072">
    <property type="entry name" value="Histone-fold"/>
</dbReference>
<dbReference type="InterPro" id="IPR037796">
    <property type="entry name" value="TAF6"/>
</dbReference>
<dbReference type="InterPro" id="IPR011442">
    <property type="entry name" value="TAF6_C"/>
</dbReference>
<dbReference type="InterPro" id="IPR046344">
    <property type="entry name" value="TAF6_C_sf"/>
</dbReference>
<dbReference type="InterPro" id="IPR004823">
    <property type="entry name" value="TAF_TATA-bd_Histone-like_dom"/>
</dbReference>
<dbReference type="PANTHER" id="PTHR10221">
    <property type="entry name" value="TRANSCRIPTION INITIATION FACTOR TFIID SUBUNIT 6"/>
    <property type="match status" value="1"/>
</dbReference>
<dbReference type="PANTHER" id="PTHR10221:SF13">
    <property type="entry name" value="TRANSCRIPTION INITIATION FACTOR TFIID SUBUNIT 6"/>
    <property type="match status" value="1"/>
</dbReference>
<dbReference type="Pfam" id="PF02969">
    <property type="entry name" value="TAF"/>
    <property type="match status" value="1"/>
</dbReference>
<dbReference type="Pfam" id="PF07571">
    <property type="entry name" value="TAF6_C"/>
    <property type="match status" value="1"/>
</dbReference>
<dbReference type="SMART" id="SM00803">
    <property type="entry name" value="TAF"/>
    <property type="match status" value="1"/>
</dbReference>
<dbReference type="SUPFAM" id="SSF48371">
    <property type="entry name" value="ARM repeat"/>
    <property type="match status" value="1"/>
</dbReference>
<dbReference type="SUPFAM" id="SSF47113">
    <property type="entry name" value="Histone-fold"/>
    <property type="match status" value="1"/>
</dbReference>
<reference key="1">
    <citation type="journal article" date="2004" name="Gene">
        <title>TBP-associated factors in Arabidopsis.</title>
        <authorList>
            <person name="Lago C."/>
            <person name="Clerici E."/>
            <person name="Mizzi L."/>
            <person name="Colombo L."/>
            <person name="Kater M.M."/>
        </authorList>
    </citation>
    <scope>NUCLEOTIDE SEQUENCE [MRNA]</scope>
    <scope>IDENTIFICATION</scope>
    <scope>NOMENCLATURE</scope>
    <scope>TISSUE SPECIFICITY</scope>
</reference>
<reference key="2">
    <citation type="journal article" date="2007" name="Plant Mol. Biol.">
        <title>Yeast two-hybrid map of Arabidopsis TFIID.</title>
        <authorList>
            <person name="Lawit S.J."/>
            <person name="O'Grady K."/>
            <person name="Gurley W.B."/>
            <person name="Czarnecka-Verner E."/>
        </authorList>
    </citation>
    <scope>NUCLEOTIDE SEQUENCE [MRNA]</scope>
</reference>
<reference key="3">
    <citation type="journal article" date="2000" name="Nature">
        <title>Sequence and analysis of chromosome 1 of the plant Arabidopsis thaliana.</title>
        <authorList>
            <person name="Theologis A."/>
            <person name="Ecker J.R."/>
            <person name="Palm C.J."/>
            <person name="Federspiel N.A."/>
            <person name="Kaul S."/>
            <person name="White O."/>
            <person name="Alonso J."/>
            <person name="Altafi H."/>
            <person name="Araujo R."/>
            <person name="Bowman C.L."/>
            <person name="Brooks S.Y."/>
            <person name="Buehler E."/>
            <person name="Chan A."/>
            <person name="Chao Q."/>
            <person name="Chen H."/>
            <person name="Cheuk R.F."/>
            <person name="Chin C.W."/>
            <person name="Chung M.K."/>
            <person name="Conn L."/>
            <person name="Conway A.B."/>
            <person name="Conway A.R."/>
            <person name="Creasy T.H."/>
            <person name="Dewar K."/>
            <person name="Dunn P."/>
            <person name="Etgu P."/>
            <person name="Feldblyum T.V."/>
            <person name="Feng J.-D."/>
            <person name="Fong B."/>
            <person name="Fujii C.Y."/>
            <person name="Gill J.E."/>
            <person name="Goldsmith A.D."/>
            <person name="Haas B."/>
            <person name="Hansen N.F."/>
            <person name="Hughes B."/>
            <person name="Huizar L."/>
            <person name="Hunter J.L."/>
            <person name="Jenkins J."/>
            <person name="Johnson-Hopson C."/>
            <person name="Khan S."/>
            <person name="Khaykin E."/>
            <person name="Kim C.J."/>
            <person name="Koo H.L."/>
            <person name="Kremenetskaia I."/>
            <person name="Kurtz D.B."/>
            <person name="Kwan A."/>
            <person name="Lam B."/>
            <person name="Langin-Hooper S."/>
            <person name="Lee A."/>
            <person name="Lee J.M."/>
            <person name="Lenz C.A."/>
            <person name="Li J.H."/>
            <person name="Li Y.-P."/>
            <person name="Lin X."/>
            <person name="Liu S.X."/>
            <person name="Liu Z.A."/>
            <person name="Luros J.S."/>
            <person name="Maiti R."/>
            <person name="Marziali A."/>
            <person name="Militscher J."/>
            <person name="Miranda M."/>
            <person name="Nguyen M."/>
            <person name="Nierman W.C."/>
            <person name="Osborne B.I."/>
            <person name="Pai G."/>
            <person name="Peterson J."/>
            <person name="Pham P.K."/>
            <person name="Rizzo M."/>
            <person name="Rooney T."/>
            <person name="Rowley D."/>
            <person name="Sakano H."/>
            <person name="Salzberg S.L."/>
            <person name="Schwartz J.R."/>
            <person name="Shinn P."/>
            <person name="Southwick A.M."/>
            <person name="Sun H."/>
            <person name="Tallon L.J."/>
            <person name="Tambunga G."/>
            <person name="Toriumi M.J."/>
            <person name="Town C.D."/>
            <person name="Utterback T."/>
            <person name="Van Aken S."/>
            <person name="Vaysberg M."/>
            <person name="Vysotskaia V.S."/>
            <person name="Walker M."/>
            <person name="Wu D."/>
            <person name="Yu G."/>
            <person name="Fraser C.M."/>
            <person name="Venter J.C."/>
            <person name="Davis R.W."/>
        </authorList>
    </citation>
    <scope>NUCLEOTIDE SEQUENCE [LARGE SCALE GENOMIC DNA]</scope>
    <source>
        <strain>cv. Columbia</strain>
    </source>
</reference>
<reference key="4">
    <citation type="journal article" date="2017" name="Plant J.">
        <title>Araport11: a complete reannotation of the Arabidopsis thaliana reference genome.</title>
        <authorList>
            <person name="Cheng C.Y."/>
            <person name="Krishnakumar V."/>
            <person name="Chan A.P."/>
            <person name="Thibaud-Nissen F."/>
            <person name="Schobel S."/>
            <person name="Town C.D."/>
        </authorList>
    </citation>
    <scope>GENOME REANNOTATION</scope>
    <source>
        <strain>cv. Columbia</strain>
    </source>
</reference>
<reference key="5">
    <citation type="journal article" date="2003" name="Science">
        <title>Empirical analysis of transcriptional activity in the Arabidopsis genome.</title>
        <authorList>
            <person name="Yamada K."/>
            <person name="Lim J."/>
            <person name="Dale J.M."/>
            <person name="Chen H."/>
            <person name="Shinn P."/>
            <person name="Palm C.J."/>
            <person name="Southwick A.M."/>
            <person name="Wu H.C."/>
            <person name="Kim C.J."/>
            <person name="Nguyen M."/>
            <person name="Pham P.K."/>
            <person name="Cheuk R.F."/>
            <person name="Karlin-Newmann G."/>
            <person name="Liu S.X."/>
            <person name="Lam B."/>
            <person name="Sakano H."/>
            <person name="Wu T."/>
            <person name="Yu G."/>
            <person name="Miranda M."/>
            <person name="Quach H.L."/>
            <person name="Tripp M."/>
            <person name="Chang C.H."/>
            <person name="Lee J.M."/>
            <person name="Toriumi M.J."/>
            <person name="Chan M.M."/>
            <person name="Tang C.C."/>
            <person name="Onodera C.S."/>
            <person name="Deng J.M."/>
            <person name="Akiyama K."/>
            <person name="Ansari Y."/>
            <person name="Arakawa T."/>
            <person name="Banh J."/>
            <person name="Banno F."/>
            <person name="Bowser L."/>
            <person name="Brooks S.Y."/>
            <person name="Carninci P."/>
            <person name="Chao Q."/>
            <person name="Choy N."/>
            <person name="Enju A."/>
            <person name="Goldsmith A.D."/>
            <person name="Gurjal M."/>
            <person name="Hansen N.F."/>
            <person name="Hayashizaki Y."/>
            <person name="Johnson-Hopson C."/>
            <person name="Hsuan V.W."/>
            <person name="Iida K."/>
            <person name="Karnes M."/>
            <person name="Khan S."/>
            <person name="Koesema E."/>
            <person name="Ishida J."/>
            <person name="Jiang P.X."/>
            <person name="Jones T."/>
            <person name="Kawai J."/>
            <person name="Kamiya A."/>
            <person name="Meyers C."/>
            <person name="Nakajima M."/>
            <person name="Narusaka M."/>
            <person name="Seki M."/>
            <person name="Sakurai T."/>
            <person name="Satou M."/>
            <person name="Tamse R."/>
            <person name="Vaysberg M."/>
            <person name="Wallender E.K."/>
            <person name="Wong C."/>
            <person name="Yamamura Y."/>
            <person name="Yuan S."/>
            <person name="Shinozaki K."/>
            <person name="Davis R.W."/>
            <person name="Theologis A."/>
            <person name="Ecker J.R."/>
        </authorList>
    </citation>
    <scope>NUCLEOTIDE SEQUENCE [LARGE SCALE MRNA]</scope>
    <source>
        <strain>cv. Columbia</strain>
    </source>
</reference>
<reference key="6">
    <citation type="journal article" date="2009" name="DNA Res.">
        <title>Analysis of multiple occurrences of alternative splicing events in Arabidopsis thaliana using novel sequenced full-length cDNAs.</title>
        <authorList>
            <person name="Iida K."/>
            <person name="Fukami-Kobayashi K."/>
            <person name="Toyoda A."/>
            <person name="Sakaki Y."/>
            <person name="Kobayashi M."/>
            <person name="Seki M."/>
            <person name="Shinozaki K."/>
        </authorList>
    </citation>
    <scope>NUCLEOTIDE SEQUENCE [LARGE SCALE MRNA]</scope>
    <source>
        <strain>cv. Columbia</strain>
        <tissue>Flower</tissue>
        <tissue>Silique</tissue>
    </source>
</reference>
<reference key="7">
    <citation type="journal article" date="2005" name="Dev. Biol.">
        <title>The Arabidopsis TFIID factor AtTAF6 controls pollen tube growth.</title>
        <authorList>
            <person name="Lago C."/>
            <person name="Clerici E."/>
            <person name="Dreni L."/>
            <person name="Horlow C."/>
            <person name="Caporali E."/>
            <person name="Colombo L."/>
            <person name="Kater M.M."/>
        </authorList>
    </citation>
    <scope>FUNCTION</scope>
    <scope>DISRUPTION PHENOTYPE</scope>
    <scope>TISSUE SPECIFICITY</scope>
    <scope>DEVELOPMENTAL STAGE</scope>
    <source>
        <strain>cv. Wassilewskija</strain>
    </source>
</reference>
<reference key="8">
    <citation type="journal article" date="2009" name="Plant Physiol.">
        <title>Large-scale Arabidopsis phosphoproteome profiling reveals novel chloroplast kinase substrates and phosphorylation networks.</title>
        <authorList>
            <person name="Reiland S."/>
            <person name="Messerli G."/>
            <person name="Baerenfaller K."/>
            <person name="Gerrits B."/>
            <person name="Endler A."/>
            <person name="Grossmann J."/>
            <person name="Gruissem W."/>
            <person name="Baginsky S."/>
        </authorList>
    </citation>
    <scope>PHOSPHORYLATION [LARGE SCALE ANALYSIS] AT SER-434</scope>
    <scope>IDENTIFICATION BY MASS SPECTROMETRY [LARGE SCALE ANALYSIS]</scope>
</reference>
<name>TAF6_ARATH</name>
<feature type="chain" id="PRO_0000424042" description="Transcription initiation factor TFIID subunit 6">
    <location>
        <begin position="1"/>
        <end position="549"/>
    </location>
</feature>
<feature type="domain" description="Histone-fold">
    <location>
        <begin position="5"/>
        <end position="78"/>
    </location>
</feature>
<feature type="region of interest" description="Disordered" evidence="1">
    <location>
        <begin position="399"/>
        <end position="501"/>
    </location>
</feature>
<feature type="compositionally biased region" description="Polar residues" evidence="1">
    <location>
        <begin position="427"/>
        <end position="436"/>
    </location>
</feature>
<feature type="compositionally biased region" description="Low complexity" evidence="1">
    <location>
        <begin position="467"/>
        <end position="482"/>
    </location>
</feature>
<feature type="compositionally biased region" description="Basic and acidic residues" evidence="1">
    <location>
        <begin position="489"/>
        <end position="501"/>
    </location>
</feature>
<feature type="modified residue" description="Phosphoserine" evidence="5">
    <location>
        <position position="434"/>
    </location>
</feature>
<feature type="sequence conflict" description="In Ref. 6; BAH20105." evidence="4" ref="6">
    <original>R</original>
    <variation>V</variation>
    <location>
        <position position="240"/>
    </location>
</feature>
<feature type="sequence conflict" description="In Ref. 6; BAH19928." evidence="4" ref="6">
    <original>A</original>
    <variation>V</variation>
    <location>
        <position position="383"/>
    </location>
</feature>
<proteinExistence type="evidence at protein level"/>
<gene>
    <name type="primary">TAF6</name>
    <name type="synonym">EMB2781</name>
    <name type="synonym">TAFII59</name>
    <name type="ordered locus">At1g04950</name>
    <name type="ORF">F13M7.6</name>
</gene>
<comment type="function">
    <text evidence="3">TAFs are components of the transcription factor IID (TFIID) complex that is essential for mediating regulation of RNA polymerase transcription. Required for proper pollen function. May stabilize the interaction of TFIID with selected promoters. Not redundant with TAF6B.</text>
</comment>
<comment type="subunit">
    <text>Component of the TFIID complex. TFIID is composed of TATA binding protein (TBP) and a number of TBP-associated factors (TAFs) whose MWs range from 14-217 kDa.</text>
</comment>
<comment type="subcellular location">
    <subcellularLocation>
        <location evidence="4">Nucleus</location>
    </subcellularLocation>
</comment>
<comment type="tissue specificity">
    <text evidence="2 3">Expressed in roots, leaves, inflorescences and siliques.</text>
</comment>
<comment type="developmental stage">
    <text evidence="3">Expressed in germinating pollen.</text>
</comment>
<comment type="disruption phenotype">
    <text evidence="3">Lethal when homozygote. Reduced pollen tube growth when heterozygote.</text>
</comment>
<comment type="similarity">
    <text evidence="4">Belongs to the TAF6 family.</text>
</comment>
<keyword id="KW-0010">Activator</keyword>
<keyword id="KW-0539">Nucleus</keyword>
<keyword id="KW-0597">Phosphoprotein</keyword>
<keyword id="KW-1185">Reference proteome</keyword>
<keyword id="KW-0804">Transcription</keyword>
<keyword id="KW-0805">Transcription regulation</keyword>
<evidence type="ECO:0000256" key="1">
    <source>
        <dbReference type="SAM" id="MobiDB-lite"/>
    </source>
</evidence>
<evidence type="ECO:0000269" key="2">
    <source>
    </source>
</evidence>
<evidence type="ECO:0000269" key="3">
    <source>
    </source>
</evidence>
<evidence type="ECO:0000305" key="4"/>
<evidence type="ECO:0007744" key="5">
    <source>
    </source>
</evidence>
<sequence length="549" mass="61365">MSIVPKETVEVIAQSIGITNLLPEAALMLAPDVEYRVREIMQEAIKCMRHSKRTTLTASDVDGALNLRNVEPIYGFASGGPFRFRKAIGHRDLFYTDDREVDFKDVIEAPLPKAPLDTEIVCHWLAIEGVQPAIPENAPLEVIRAPAETKIHEQKDGPLIDVRLPVKHVLSRELQLYFQKIAELAMSKSNPPLYKEALVSLASDSGLHPLVPYFTNFIADEVSNGLNDFRLLFNLMHIVRSLLQNPHIHIEPYLHQLMPSVVTCLVSRKLGNRFADNHWELRDFAANLVSLICKRYGTVYITLQSRLTRTLVNALLDPKKALTQHYGAIQGLAALGHTVVRLLILSNLEPYLSLLEPELNAEKQKNQMKIYEAWRVYGALLRAAGLCIHGRLKIFPPLPSPSPSFLHKGKGKGKIISTDPHKRKLSVDSSENQSPQKRLITMDGPDGVHSQDQSGSAPMQVDNPVENDNPPQNSVQPSSSEQASDANESESRNGKVKESGRSRAITMKAILDQIWKDDLDSGRLLVKLHELYGDRILPFIPSTEMSVFL</sequence>
<organism>
    <name type="scientific">Arabidopsis thaliana</name>
    <name type="common">Mouse-ear cress</name>
    <dbReference type="NCBI Taxonomy" id="3702"/>
    <lineage>
        <taxon>Eukaryota</taxon>
        <taxon>Viridiplantae</taxon>
        <taxon>Streptophyta</taxon>
        <taxon>Embryophyta</taxon>
        <taxon>Tracheophyta</taxon>
        <taxon>Spermatophyta</taxon>
        <taxon>Magnoliopsida</taxon>
        <taxon>eudicotyledons</taxon>
        <taxon>Gunneridae</taxon>
        <taxon>Pentapetalae</taxon>
        <taxon>rosids</taxon>
        <taxon>malvids</taxon>
        <taxon>Brassicales</taxon>
        <taxon>Brassicaceae</taxon>
        <taxon>Camelineae</taxon>
        <taxon>Arabidopsis</taxon>
    </lineage>
</organism>
<protein>
    <recommendedName>
        <fullName>Transcription initiation factor TFIID subunit 6</fullName>
    </recommendedName>
    <alternativeName>
        <fullName>Protein EMBRYO DEFECTIVE 2781</fullName>
    </alternativeName>
    <alternativeName>
        <fullName>TATA box associated factor II 59</fullName>
    </alternativeName>
    <alternativeName>
        <fullName>TBP-associated factor 6</fullName>
        <shortName>AtTAF6</shortName>
    </alternativeName>
    <alternativeName>
        <fullName>Transcription initiation factor TFIID subunit D5</fullName>
    </alternativeName>
</protein>